<proteinExistence type="inferred from homology"/>
<dbReference type="EC" id="2.7.11.1" evidence="1"/>
<dbReference type="EMBL" id="AE016877">
    <property type="protein sequence ID" value="AAP07990.1"/>
    <property type="molecule type" value="Genomic_DNA"/>
</dbReference>
<dbReference type="RefSeq" id="NP_830789.1">
    <property type="nucleotide sequence ID" value="NC_004722.1"/>
</dbReference>
<dbReference type="RefSeq" id="WP_000970576.1">
    <property type="nucleotide sequence ID" value="NZ_CP138336.1"/>
</dbReference>
<dbReference type="SMR" id="Q81H23"/>
<dbReference type="STRING" id="226900.BC_1003"/>
<dbReference type="GeneID" id="72447786"/>
<dbReference type="KEGG" id="bce:BC1003"/>
<dbReference type="PATRIC" id="fig|226900.8.peg.957"/>
<dbReference type="HOGENOM" id="CLU_090336_11_1_9"/>
<dbReference type="OrthoDB" id="9798941at2"/>
<dbReference type="Proteomes" id="UP000001417">
    <property type="component" value="Chromosome"/>
</dbReference>
<dbReference type="GO" id="GO:0005524">
    <property type="term" value="F:ATP binding"/>
    <property type="evidence" value="ECO:0007669"/>
    <property type="project" value="UniProtKB-KW"/>
</dbReference>
<dbReference type="GO" id="GO:0106310">
    <property type="term" value="F:protein serine kinase activity"/>
    <property type="evidence" value="ECO:0007669"/>
    <property type="project" value="RHEA"/>
</dbReference>
<dbReference type="GO" id="GO:0004674">
    <property type="term" value="F:protein serine/threonine kinase activity"/>
    <property type="evidence" value="ECO:0007669"/>
    <property type="project" value="UniProtKB-KW"/>
</dbReference>
<dbReference type="GO" id="GO:0016989">
    <property type="term" value="F:sigma factor antagonist activity"/>
    <property type="evidence" value="ECO:0000318"/>
    <property type="project" value="GO_Central"/>
</dbReference>
<dbReference type="GO" id="GO:0045892">
    <property type="term" value="P:negative regulation of DNA-templated transcription"/>
    <property type="evidence" value="ECO:0000318"/>
    <property type="project" value="GO_Central"/>
</dbReference>
<dbReference type="CDD" id="cd16936">
    <property type="entry name" value="HATPase_RsbW-like"/>
    <property type="match status" value="1"/>
</dbReference>
<dbReference type="FunFam" id="3.30.565.10:FF:000026">
    <property type="entry name" value="Serine-protein kinase RsbW"/>
    <property type="match status" value="1"/>
</dbReference>
<dbReference type="Gene3D" id="3.30.565.10">
    <property type="entry name" value="Histidine kinase-like ATPase, C-terminal domain"/>
    <property type="match status" value="1"/>
</dbReference>
<dbReference type="HAMAP" id="MF_00638">
    <property type="entry name" value="Anti_sigma_B"/>
    <property type="match status" value="1"/>
</dbReference>
<dbReference type="InterPro" id="IPR050267">
    <property type="entry name" value="Anti-sigma-factor_SerPK"/>
</dbReference>
<dbReference type="InterPro" id="IPR036890">
    <property type="entry name" value="HATPase_C_sf"/>
</dbReference>
<dbReference type="InterPro" id="IPR010193">
    <property type="entry name" value="RsbW"/>
</dbReference>
<dbReference type="NCBIfam" id="NF003144">
    <property type="entry name" value="PRK04069.1"/>
    <property type="match status" value="1"/>
</dbReference>
<dbReference type="NCBIfam" id="TIGR01924">
    <property type="entry name" value="rsbW_low_gc"/>
    <property type="match status" value="1"/>
</dbReference>
<dbReference type="PANTHER" id="PTHR35526">
    <property type="entry name" value="ANTI-SIGMA-F FACTOR RSBW-RELATED"/>
    <property type="match status" value="1"/>
</dbReference>
<dbReference type="PANTHER" id="PTHR35526:SF9">
    <property type="entry name" value="SERINE-PROTEIN KINASE RSBW"/>
    <property type="match status" value="1"/>
</dbReference>
<dbReference type="Pfam" id="PF13581">
    <property type="entry name" value="HATPase_c_2"/>
    <property type="match status" value="1"/>
</dbReference>
<dbReference type="SUPFAM" id="SSF55874">
    <property type="entry name" value="ATPase domain of HSP90 chaperone/DNA topoisomerase II/histidine kinase"/>
    <property type="match status" value="1"/>
</dbReference>
<reference key="1">
    <citation type="journal article" date="2003" name="Nature">
        <title>Genome sequence of Bacillus cereus and comparative analysis with Bacillus anthracis.</title>
        <authorList>
            <person name="Ivanova N."/>
            <person name="Sorokin A."/>
            <person name="Anderson I."/>
            <person name="Galleron N."/>
            <person name="Candelon B."/>
            <person name="Kapatral V."/>
            <person name="Bhattacharyya A."/>
            <person name="Reznik G."/>
            <person name="Mikhailova N."/>
            <person name="Lapidus A."/>
            <person name="Chu L."/>
            <person name="Mazur M."/>
            <person name="Goltsman E."/>
            <person name="Larsen N."/>
            <person name="D'Souza M."/>
            <person name="Walunas T."/>
            <person name="Grechkin Y."/>
            <person name="Pusch G."/>
            <person name="Haselkorn R."/>
            <person name="Fonstein M."/>
            <person name="Ehrlich S.D."/>
            <person name="Overbeek R."/>
            <person name="Kyrpides N.C."/>
        </authorList>
    </citation>
    <scope>NUCLEOTIDE SEQUENCE [LARGE SCALE GENOMIC DNA]</scope>
    <source>
        <strain>ATCC 14579 / DSM 31 / CCUG 7414 / JCM 2152 / NBRC 15305 / NCIMB 9373 / NCTC 2599 / NRRL B-3711</strain>
    </source>
</reference>
<name>RSBW_BACCR</name>
<evidence type="ECO:0000255" key="1">
    <source>
        <dbReference type="HAMAP-Rule" id="MF_00638"/>
    </source>
</evidence>
<accession>Q81H23</accession>
<sequence>MMERFEKIEMKIPAKAEYVAIIRLTMAGVANRMGFAYDDIEDMKIAISEACTNIVQHAYKEDVGEIAIVFGLYENRLEIMVADNGVSFDFNNLKRKVGPYDISKPVEHLPENGLGLYLINTLMDDIQIMHDEGMTVLMTKYIQREQVENDGNPISTYESY</sequence>
<feature type="chain" id="PRO_0000203527" description="Serine-protein kinase RsbW">
    <location>
        <begin position="1"/>
        <end position="160"/>
    </location>
</feature>
<comment type="function">
    <text evidence="1">Negative regulator of sigma-B activity. Phosphorylates and inactivates its specific antagonist protein, RsbV. Upon phosphorylation of RsbV, RsbW is released and binds to sigma-B, thereby blocking its ability to form an RNA polymerase holoenzyme (E-sigma-B).</text>
</comment>
<comment type="catalytic activity">
    <reaction evidence="1">
        <text>L-seryl-[protein] + ATP = O-phospho-L-seryl-[protein] + ADP + H(+)</text>
        <dbReference type="Rhea" id="RHEA:17989"/>
        <dbReference type="Rhea" id="RHEA-COMP:9863"/>
        <dbReference type="Rhea" id="RHEA-COMP:11604"/>
        <dbReference type="ChEBI" id="CHEBI:15378"/>
        <dbReference type="ChEBI" id="CHEBI:29999"/>
        <dbReference type="ChEBI" id="CHEBI:30616"/>
        <dbReference type="ChEBI" id="CHEBI:83421"/>
        <dbReference type="ChEBI" id="CHEBI:456216"/>
        <dbReference type="EC" id="2.7.11.1"/>
    </reaction>
</comment>
<comment type="catalytic activity">
    <reaction evidence="1">
        <text>L-threonyl-[protein] + ATP = O-phospho-L-threonyl-[protein] + ADP + H(+)</text>
        <dbReference type="Rhea" id="RHEA:46608"/>
        <dbReference type="Rhea" id="RHEA-COMP:11060"/>
        <dbReference type="Rhea" id="RHEA-COMP:11605"/>
        <dbReference type="ChEBI" id="CHEBI:15378"/>
        <dbReference type="ChEBI" id="CHEBI:30013"/>
        <dbReference type="ChEBI" id="CHEBI:30616"/>
        <dbReference type="ChEBI" id="CHEBI:61977"/>
        <dbReference type="ChEBI" id="CHEBI:456216"/>
        <dbReference type="EC" id="2.7.11.1"/>
    </reaction>
</comment>
<comment type="similarity">
    <text evidence="1">Belongs to the anti-sigma-factor family.</text>
</comment>
<organism>
    <name type="scientific">Bacillus cereus (strain ATCC 14579 / DSM 31 / CCUG 7414 / JCM 2152 / NBRC 15305 / NCIMB 9373 / NCTC 2599 / NRRL B-3711)</name>
    <dbReference type="NCBI Taxonomy" id="226900"/>
    <lineage>
        <taxon>Bacteria</taxon>
        <taxon>Bacillati</taxon>
        <taxon>Bacillota</taxon>
        <taxon>Bacilli</taxon>
        <taxon>Bacillales</taxon>
        <taxon>Bacillaceae</taxon>
        <taxon>Bacillus</taxon>
        <taxon>Bacillus cereus group</taxon>
    </lineage>
</organism>
<keyword id="KW-0067">ATP-binding</keyword>
<keyword id="KW-0418">Kinase</keyword>
<keyword id="KW-0547">Nucleotide-binding</keyword>
<keyword id="KW-1185">Reference proteome</keyword>
<keyword id="KW-0723">Serine/threonine-protein kinase</keyword>
<keyword id="KW-0808">Transferase</keyword>
<gene>
    <name evidence="1" type="primary">rsbW</name>
    <name type="ordered locus">BC_1003</name>
</gene>
<protein>
    <recommendedName>
        <fullName evidence="1">Serine-protein kinase RsbW</fullName>
        <ecNumber evidence="1">2.7.11.1</ecNumber>
    </recommendedName>
    <alternativeName>
        <fullName evidence="1">Anti-sigma-B factor</fullName>
    </alternativeName>
    <alternativeName>
        <fullName evidence="1">Sigma-B negative effector RsbW</fullName>
    </alternativeName>
</protein>